<accession>Q2YBA5</accession>
<gene>
    <name evidence="1" type="primary">pyrH</name>
    <name type="ordered locus">Nmul_A0659</name>
</gene>
<organism>
    <name type="scientific">Nitrosospira multiformis (strain ATCC 25196 / NCIMB 11849 / C 71)</name>
    <dbReference type="NCBI Taxonomy" id="323848"/>
    <lineage>
        <taxon>Bacteria</taxon>
        <taxon>Pseudomonadati</taxon>
        <taxon>Pseudomonadota</taxon>
        <taxon>Betaproteobacteria</taxon>
        <taxon>Nitrosomonadales</taxon>
        <taxon>Nitrosomonadaceae</taxon>
        <taxon>Nitrosospira</taxon>
    </lineage>
</organism>
<dbReference type="EC" id="2.7.4.22" evidence="1"/>
<dbReference type="EMBL" id="CP000103">
    <property type="protein sequence ID" value="ABB73966.1"/>
    <property type="molecule type" value="Genomic_DNA"/>
</dbReference>
<dbReference type="RefSeq" id="WP_011380016.1">
    <property type="nucleotide sequence ID" value="NC_007614.1"/>
</dbReference>
<dbReference type="SMR" id="Q2YBA5"/>
<dbReference type="STRING" id="323848.Nmul_A0659"/>
<dbReference type="KEGG" id="nmu:Nmul_A0659"/>
<dbReference type="eggNOG" id="COG0528">
    <property type="taxonomic scope" value="Bacteria"/>
</dbReference>
<dbReference type="HOGENOM" id="CLU_033861_0_0_4"/>
<dbReference type="OrthoDB" id="9807458at2"/>
<dbReference type="UniPathway" id="UPA00159">
    <property type="reaction ID" value="UER00275"/>
</dbReference>
<dbReference type="Proteomes" id="UP000002718">
    <property type="component" value="Chromosome"/>
</dbReference>
<dbReference type="GO" id="GO:0005829">
    <property type="term" value="C:cytosol"/>
    <property type="evidence" value="ECO:0007669"/>
    <property type="project" value="TreeGrafter"/>
</dbReference>
<dbReference type="GO" id="GO:0005524">
    <property type="term" value="F:ATP binding"/>
    <property type="evidence" value="ECO:0007669"/>
    <property type="project" value="UniProtKB-KW"/>
</dbReference>
<dbReference type="GO" id="GO:0033862">
    <property type="term" value="F:UMP kinase activity"/>
    <property type="evidence" value="ECO:0007669"/>
    <property type="project" value="UniProtKB-EC"/>
</dbReference>
<dbReference type="GO" id="GO:0044210">
    <property type="term" value="P:'de novo' CTP biosynthetic process"/>
    <property type="evidence" value="ECO:0007669"/>
    <property type="project" value="UniProtKB-UniRule"/>
</dbReference>
<dbReference type="GO" id="GO:0006225">
    <property type="term" value="P:UDP biosynthetic process"/>
    <property type="evidence" value="ECO:0007669"/>
    <property type="project" value="TreeGrafter"/>
</dbReference>
<dbReference type="CDD" id="cd04254">
    <property type="entry name" value="AAK_UMPK-PyrH-Ec"/>
    <property type="match status" value="1"/>
</dbReference>
<dbReference type="FunFam" id="3.40.1160.10:FF:000001">
    <property type="entry name" value="Uridylate kinase"/>
    <property type="match status" value="1"/>
</dbReference>
<dbReference type="Gene3D" id="3.40.1160.10">
    <property type="entry name" value="Acetylglutamate kinase-like"/>
    <property type="match status" value="1"/>
</dbReference>
<dbReference type="HAMAP" id="MF_01220_B">
    <property type="entry name" value="PyrH_B"/>
    <property type="match status" value="1"/>
</dbReference>
<dbReference type="InterPro" id="IPR036393">
    <property type="entry name" value="AceGlu_kinase-like_sf"/>
</dbReference>
<dbReference type="InterPro" id="IPR001048">
    <property type="entry name" value="Asp/Glu/Uridylate_kinase"/>
</dbReference>
<dbReference type="InterPro" id="IPR011817">
    <property type="entry name" value="Uridylate_kinase"/>
</dbReference>
<dbReference type="InterPro" id="IPR015963">
    <property type="entry name" value="Uridylate_kinase_bac"/>
</dbReference>
<dbReference type="NCBIfam" id="TIGR02075">
    <property type="entry name" value="pyrH_bact"/>
    <property type="match status" value="1"/>
</dbReference>
<dbReference type="PANTHER" id="PTHR42833">
    <property type="entry name" value="URIDYLATE KINASE"/>
    <property type="match status" value="1"/>
</dbReference>
<dbReference type="PANTHER" id="PTHR42833:SF4">
    <property type="entry name" value="URIDYLATE KINASE PUMPKIN, CHLOROPLASTIC"/>
    <property type="match status" value="1"/>
</dbReference>
<dbReference type="Pfam" id="PF00696">
    <property type="entry name" value="AA_kinase"/>
    <property type="match status" value="1"/>
</dbReference>
<dbReference type="PIRSF" id="PIRSF005650">
    <property type="entry name" value="Uridylate_kin"/>
    <property type="match status" value="1"/>
</dbReference>
<dbReference type="SUPFAM" id="SSF53633">
    <property type="entry name" value="Carbamate kinase-like"/>
    <property type="match status" value="1"/>
</dbReference>
<proteinExistence type="inferred from homology"/>
<name>PYRH_NITMU</name>
<evidence type="ECO:0000255" key="1">
    <source>
        <dbReference type="HAMAP-Rule" id="MF_01220"/>
    </source>
</evidence>
<keyword id="KW-0067">ATP-binding</keyword>
<keyword id="KW-0963">Cytoplasm</keyword>
<keyword id="KW-0418">Kinase</keyword>
<keyword id="KW-0547">Nucleotide-binding</keyword>
<keyword id="KW-0665">Pyrimidine biosynthesis</keyword>
<keyword id="KW-1185">Reference proteome</keyword>
<keyword id="KW-0808">Transferase</keyword>
<feature type="chain" id="PRO_0000323907" description="Uridylate kinase">
    <location>
        <begin position="1"/>
        <end position="238"/>
    </location>
</feature>
<feature type="binding site" evidence="1">
    <location>
        <begin position="12"/>
        <end position="15"/>
    </location>
    <ligand>
        <name>ATP</name>
        <dbReference type="ChEBI" id="CHEBI:30616"/>
    </ligand>
</feature>
<feature type="binding site" evidence="1">
    <location>
        <position position="54"/>
    </location>
    <ligand>
        <name>UMP</name>
        <dbReference type="ChEBI" id="CHEBI:57865"/>
    </ligand>
</feature>
<feature type="binding site" evidence="1">
    <location>
        <position position="55"/>
    </location>
    <ligand>
        <name>ATP</name>
        <dbReference type="ChEBI" id="CHEBI:30616"/>
    </ligand>
</feature>
<feature type="binding site" evidence="1">
    <location>
        <position position="59"/>
    </location>
    <ligand>
        <name>ATP</name>
        <dbReference type="ChEBI" id="CHEBI:30616"/>
    </ligand>
</feature>
<feature type="binding site" evidence="1">
    <location>
        <position position="74"/>
    </location>
    <ligand>
        <name>UMP</name>
        <dbReference type="ChEBI" id="CHEBI:57865"/>
    </ligand>
</feature>
<feature type="binding site" evidence="1">
    <location>
        <begin position="135"/>
        <end position="142"/>
    </location>
    <ligand>
        <name>UMP</name>
        <dbReference type="ChEBI" id="CHEBI:57865"/>
    </ligand>
</feature>
<feature type="binding site" evidence="1">
    <location>
        <position position="162"/>
    </location>
    <ligand>
        <name>ATP</name>
        <dbReference type="ChEBI" id="CHEBI:30616"/>
    </ligand>
</feature>
<feature type="binding site" evidence="1">
    <location>
        <position position="168"/>
    </location>
    <ligand>
        <name>ATP</name>
        <dbReference type="ChEBI" id="CHEBI:30616"/>
    </ligand>
</feature>
<feature type="binding site" evidence="1">
    <location>
        <position position="171"/>
    </location>
    <ligand>
        <name>ATP</name>
        <dbReference type="ChEBI" id="CHEBI:30616"/>
    </ligand>
</feature>
<reference key="1">
    <citation type="submission" date="2005-08" db="EMBL/GenBank/DDBJ databases">
        <title>Complete sequence of chromosome 1 of Nitrosospira multiformis ATCC 25196.</title>
        <authorList>
            <person name="Copeland A."/>
            <person name="Lucas S."/>
            <person name="Lapidus A."/>
            <person name="Barry K."/>
            <person name="Detter J.C."/>
            <person name="Glavina T."/>
            <person name="Hammon N."/>
            <person name="Israni S."/>
            <person name="Pitluck S."/>
            <person name="Chain P."/>
            <person name="Malfatti S."/>
            <person name="Shin M."/>
            <person name="Vergez L."/>
            <person name="Schmutz J."/>
            <person name="Larimer F."/>
            <person name="Land M."/>
            <person name="Hauser L."/>
            <person name="Kyrpides N."/>
            <person name="Lykidis A."/>
            <person name="Richardson P."/>
        </authorList>
    </citation>
    <scope>NUCLEOTIDE SEQUENCE [LARGE SCALE GENOMIC DNA]</scope>
    <source>
        <strain>ATCC 25196 / NCIMB 11849 / C 71</strain>
    </source>
</reference>
<sequence length="238" mass="25986">MTIPAYKRILLKLSGEALMGDDSYGINRDVIERIVAEIAEVNQLGVEVAVVIGGGNIFRGMTSSAEGMDRATADYMGMLATVMNALALQDAMRRAGLVSRVQSALRIDQVVEPYIRGKAIRYLEEGKIVIFAAGTGNPFFTTDTAAALRGMEMNVDIVLKATKVDGVYTTDPKINPDAERYQRLSFDTAIAENLKVMDATALTLCRDQKLPLKVFSIFKAEALRRVVMGEEEGTLVEV</sequence>
<protein>
    <recommendedName>
        <fullName evidence="1">Uridylate kinase</fullName>
        <shortName evidence="1">UK</shortName>
        <ecNumber evidence="1">2.7.4.22</ecNumber>
    </recommendedName>
    <alternativeName>
        <fullName evidence="1">Uridine monophosphate kinase</fullName>
        <shortName evidence="1">UMP kinase</shortName>
        <shortName evidence="1">UMPK</shortName>
    </alternativeName>
</protein>
<comment type="function">
    <text evidence="1">Catalyzes the reversible phosphorylation of UMP to UDP.</text>
</comment>
<comment type="catalytic activity">
    <reaction evidence="1">
        <text>UMP + ATP = UDP + ADP</text>
        <dbReference type="Rhea" id="RHEA:24400"/>
        <dbReference type="ChEBI" id="CHEBI:30616"/>
        <dbReference type="ChEBI" id="CHEBI:57865"/>
        <dbReference type="ChEBI" id="CHEBI:58223"/>
        <dbReference type="ChEBI" id="CHEBI:456216"/>
        <dbReference type="EC" id="2.7.4.22"/>
    </reaction>
</comment>
<comment type="activity regulation">
    <text evidence="1">Inhibited by UTP.</text>
</comment>
<comment type="pathway">
    <text evidence="1">Pyrimidine metabolism; CTP biosynthesis via de novo pathway; UDP from UMP (UMPK route): step 1/1.</text>
</comment>
<comment type="subunit">
    <text evidence="1">Homohexamer.</text>
</comment>
<comment type="subcellular location">
    <subcellularLocation>
        <location evidence="1">Cytoplasm</location>
    </subcellularLocation>
</comment>
<comment type="similarity">
    <text evidence="1">Belongs to the UMP kinase family.</text>
</comment>